<protein>
    <recommendedName>
        <fullName>Uncharacterized 12.7 kDa protein in 16S-23S DNA spacer</fullName>
    </recommendedName>
</protein>
<keyword id="KW-0150">Chloroplast</keyword>
<keyword id="KW-0934">Plastid</keyword>
<feature type="chain" id="PRO_0000217507" description="Uncharacterized 12.7 kDa protein in 16S-23S DNA spacer">
    <location>
        <begin position="1"/>
        <end position="110"/>
    </location>
</feature>
<organism>
    <name type="scientific">Auxenochlorella pyrenoidosa</name>
    <name type="common">Freshwater green alga</name>
    <name type="synonym">Chlorella pyrenoidosa</name>
    <dbReference type="NCBI Taxonomy" id="3078"/>
    <lineage>
        <taxon>Eukaryota</taxon>
        <taxon>Viridiplantae</taxon>
        <taxon>Chlorophyta</taxon>
        <taxon>core chlorophytes</taxon>
        <taxon>Trebouxiophyceae</taxon>
        <taxon>Chlorellales</taxon>
        <taxon>Chlorellaceae</taxon>
        <taxon>Auxenochlorella</taxon>
    </lineage>
</organism>
<name>YCX1_AUXPY</name>
<reference key="1">
    <citation type="journal article" date="1986" name="Nucleic Acids Res.">
        <title>Peculiar feature of the organization of rRNA genes of the Chlorella chloroplast DNA.</title>
        <authorList>
            <person name="Yamada T."/>
            <person name="Shimaji M."/>
        </authorList>
    </citation>
    <scope>NUCLEOTIDE SEQUENCE [GENOMIC DNA]</scope>
</reference>
<accession>P05720</accession>
<proteinExistence type="predicted"/>
<dbReference type="EMBL" id="X03848">
    <property type="protein sequence ID" value="CAA27477.1"/>
    <property type="molecule type" value="Genomic_DNA"/>
</dbReference>
<dbReference type="PIR" id="A24444">
    <property type="entry name" value="A24444"/>
</dbReference>
<dbReference type="SMR" id="P05720"/>
<dbReference type="GO" id="GO:0009507">
    <property type="term" value="C:chloroplast"/>
    <property type="evidence" value="ECO:0007669"/>
    <property type="project" value="UniProtKB-SubCell"/>
</dbReference>
<geneLocation type="chloroplast"/>
<sequence length="110" mass="12782">MALSNILLFKIEFYIFSSLLMIKKKLVFSILKLLQLTEKDSKILVNESLTNKNFSKLIEFLDNYKVEKAKSITLQQLQSVLQNIKLNNSQKSEIIENIYSKLDAANHLIF</sequence>
<comment type="subcellular location">
    <subcellularLocation>
        <location>Plastid</location>
        <location>Chloroplast</location>
    </subcellularLocation>
</comment>